<proteinExistence type="evidence at protein level"/>
<protein>
    <recommendedName>
        <fullName>DNA-directed RNA polymerase III subunit RPC9</fullName>
        <shortName>RNA polymerase III subunit C9</shortName>
    </recommendedName>
    <alternativeName>
        <fullName>Calcitonin gene-related peptide-receptor component protein</fullName>
        <shortName>CGRP-RCP</shortName>
        <shortName>CGRP-receptor component protein</shortName>
        <shortName>CGRPRCP</shortName>
        <shortName>HsC17</shortName>
    </alternativeName>
</protein>
<gene>
    <name evidence="20" type="primary">CRCP</name>
</gene>
<comment type="function">
    <text evidence="2 7 8 9 11 12 14">DNA-dependent RNA polymerase catalyzes the transcription of DNA into RNA using the four ribonucleoside triphosphates as substrates (PubMed:20413673, PubMed:33558764, PubMed:34675218). Specific peripheric component of RNA polymerase III (Pol III) which synthesizes small non-coding RNAs including 5S rRNA, snRNAs, tRNAs and miRNAs from at least 500 distinct genomic loci. With POLR3H/RPC8 forms a mobile stalk that protrudes from Pol III core and functions primarily in transcription initiation (By similarity) (PubMed:20413673, PubMed:33558764, PubMed:33558766, PubMed:34675218). Pol III plays a key role in sensing and limiting infection by intracellular bacteria and DNA viruses. Acts as nuclear and cytosolic DNA sensor involved in innate immune response. Can sense non-self dsDNA that serves as template for transcription into dsRNA. The non-self RNA polymerase III transcripts, such as Epstein-Barr virus-encoded RNAs (EBERs) induce type I interferon and NF-kappa-B through the RIG-I pathway (PubMed:19609254, PubMed:19631370).</text>
</comment>
<comment type="function">
    <text evidence="1">Accessory protein for the calcitonin gene-related peptide (CGRP) receptor. It modulates CGRP responsiveness in a variety of tissues.</text>
</comment>
<comment type="subunit">
    <text evidence="5 6 10 11 12 13 14">Component of the RNA polymerase III complex consisting of 17 subunits: a ten-subunit horseshoe-shaped catalytic core composed of POLR3A/RPC1, POLR3B/RPC2, POLR1C/RPAC1, POLR1D/RPAC2, POLR3K/RPC10, POLR2E/RPABC1, POLR2F/RPABC2, POLR2H/RPABC3, POLR2K/RPABC4 and POLR2L/RPABC5; a mobile stalk composed of two subunits POLR3H/RPC8 and CRCP/RPC9, protruding from the core and functioning primarily in transcription initiation; and additional subunits homologous to general transcription factors of the RNA polymerase II machinery, POLR3C/RPC3-POLR3F/RPC6-POLR3G/RPC7 heterotrimer required for transcription initiation and POLR3D/RPC4-POLR3E/RPC5 heterodimer involved in both transcription initiation and termination.</text>
</comment>
<comment type="interaction">
    <interactant intactId="EBI-2654687">
        <id>O75575</id>
    </interactant>
    <interactant intactId="EBI-722877">
        <id>Q99081</id>
        <label>TCF12</label>
    </interactant>
    <organismsDiffer>false</organismsDiffer>
    <experiments>3</experiments>
</comment>
<comment type="interaction">
    <interactant intactId="EBI-2654687">
        <id>O75575</id>
    </interactant>
    <interactant intactId="EBI-745786">
        <id>Q8NF64</id>
        <label>ZMIZ2</label>
    </interactant>
    <organismsDiffer>false</organismsDiffer>
    <experiments>3</experiments>
</comment>
<comment type="interaction">
    <interactant intactId="EBI-2654687">
        <id>O75575</id>
    </interactant>
    <interactant intactId="EBI-10182121">
        <id>Q8NF64-2</id>
        <label>ZMIZ2</label>
    </interactant>
    <organismsDiffer>false</organismsDiffer>
    <experiments>3</experiments>
</comment>
<comment type="interaction">
    <interactant intactId="EBI-12880830">
        <id>O75575-2</id>
    </interactant>
    <interactant intactId="EBI-712648">
        <id>O95994</id>
        <label>AGR2</label>
    </interactant>
    <organismsDiffer>false</organismsDiffer>
    <experiments>3</experiments>
</comment>
<comment type="interaction">
    <interactant intactId="EBI-12880830">
        <id>O75575-2</id>
    </interactant>
    <interactant intactId="EBI-372128">
        <id>Q9NP97</id>
        <label>DYNLRB1</label>
    </interactant>
    <organismsDiffer>false</organismsDiffer>
    <experiments>3</experiments>
</comment>
<comment type="interaction">
    <interactant intactId="EBI-12880830">
        <id>O75575-2</id>
    </interactant>
    <interactant intactId="EBI-19954058">
        <id>O15499</id>
        <label>GSC2</label>
    </interactant>
    <organismsDiffer>false</organismsDiffer>
    <experiments>3</experiments>
</comment>
<comment type="interaction">
    <interactant intactId="EBI-12880830">
        <id>O75575-2</id>
    </interactant>
    <interactant intactId="EBI-473196">
        <id>Q5T3J3</id>
        <label>LRIF1</label>
    </interactant>
    <organismsDiffer>false</organismsDiffer>
    <experiments>3</experiments>
</comment>
<comment type="subcellular location">
    <subcellularLocation>
        <location evidence="10">Nucleus</location>
    </subcellularLocation>
    <subcellularLocation>
        <location evidence="1">Cell membrane</location>
        <topology evidence="1">Peripheral membrane protein</topology>
        <orientation evidence="1">Cytoplasmic side</orientation>
    </subcellularLocation>
</comment>
<comment type="alternative products">
    <event type="alternative splicing"/>
    <isoform>
        <id>O75575-1</id>
        <name>1</name>
        <sequence type="displayed"/>
    </isoform>
    <isoform>
        <id>O75575-2</id>
        <name>2</name>
        <sequence type="described" ref="VSP_007538"/>
    </isoform>
    <isoform>
        <id>O75575-3</id>
        <name>3</name>
        <sequence type="described" ref="VSP_043249 VSP_007538"/>
    </isoform>
    <isoform>
        <id>O75575-4</id>
        <name>4</name>
        <sequence type="described" ref="VSP_046273"/>
    </isoform>
</comment>
<comment type="tissue specificity">
    <text evidence="4">Ubiquitous. Most prevalent in testis.</text>
</comment>
<comment type="similarity">
    <text evidence="19">Belongs to the eukaryotic RPC9 RNA polymerase subunit family.</text>
</comment>
<name>RPC9_HUMAN</name>
<reference key="1">
    <citation type="submission" date="1998-06" db="EMBL/GenBank/DDBJ databases">
        <title>Human CGRP-receptor component protein (RCP) ORF.</title>
        <authorList>
            <person name="Luebke A.E."/>
            <person name="Dahl G.P."/>
            <person name="Dickerson I.M."/>
        </authorList>
    </citation>
    <scope>NUCLEOTIDE SEQUENCE [MRNA] (ISOFORM 1)</scope>
</reference>
<reference key="2">
    <citation type="journal article" date="1999" name="Endocrinology">
        <title>Testes exhibit elevated expression of calcitonin gene-related peptide receptor component protein.</title>
        <authorList>
            <person name="Balkan W."/>
            <person name="Oates E.L."/>
            <person name="Howard G.A."/>
            <person name="Roos B.A."/>
        </authorList>
    </citation>
    <scope>NUCLEOTIDE SEQUENCE [MRNA] (ISOFORM 1)</scope>
    <scope>TISSUE SPECIFICITY</scope>
</reference>
<reference key="3">
    <citation type="journal article" date="2004" name="Nat. Genet.">
        <title>Complete sequencing and characterization of 21,243 full-length human cDNAs.</title>
        <authorList>
            <person name="Ota T."/>
            <person name="Suzuki Y."/>
            <person name="Nishikawa T."/>
            <person name="Otsuki T."/>
            <person name="Sugiyama T."/>
            <person name="Irie R."/>
            <person name="Wakamatsu A."/>
            <person name="Hayashi K."/>
            <person name="Sato H."/>
            <person name="Nagai K."/>
            <person name="Kimura K."/>
            <person name="Makita H."/>
            <person name="Sekine M."/>
            <person name="Obayashi M."/>
            <person name="Nishi T."/>
            <person name="Shibahara T."/>
            <person name="Tanaka T."/>
            <person name="Ishii S."/>
            <person name="Yamamoto J."/>
            <person name="Saito K."/>
            <person name="Kawai Y."/>
            <person name="Isono Y."/>
            <person name="Nakamura Y."/>
            <person name="Nagahari K."/>
            <person name="Murakami K."/>
            <person name="Yasuda T."/>
            <person name="Iwayanagi T."/>
            <person name="Wagatsuma M."/>
            <person name="Shiratori A."/>
            <person name="Sudo H."/>
            <person name="Hosoiri T."/>
            <person name="Kaku Y."/>
            <person name="Kodaira H."/>
            <person name="Kondo H."/>
            <person name="Sugawara M."/>
            <person name="Takahashi M."/>
            <person name="Kanda K."/>
            <person name="Yokoi T."/>
            <person name="Furuya T."/>
            <person name="Kikkawa E."/>
            <person name="Omura Y."/>
            <person name="Abe K."/>
            <person name="Kamihara K."/>
            <person name="Katsuta N."/>
            <person name="Sato K."/>
            <person name="Tanikawa M."/>
            <person name="Yamazaki M."/>
            <person name="Ninomiya K."/>
            <person name="Ishibashi T."/>
            <person name="Yamashita H."/>
            <person name="Murakawa K."/>
            <person name="Fujimori K."/>
            <person name="Tanai H."/>
            <person name="Kimata M."/>
            <person name="Watanabe M."/>
            <person name="Hiraoka S."/>
            <person name="Chiba Y."/>
            <person name="Ishida S."/>
            <person name="Ono Y."/>
            <person name="Takiguchi S."/>
            <person name="Watanabe S."/>
            <person name="Yosida M."/>
            <person name="Hotuta T."/>
            <person name="Kusano J."/>
            <person name="Kanehori K."/>
            <person name="Takahashi-Fujii A."/>
            <person name="Hara H."/>
            <person name="Tanase T.-O."/>
            <person name="Nomura Y."/>
            <person name="Togiya S."/>
            <person name="Komai F."/>
            <person name="Hara R."/>
            <person name="Takeuchi K."/>
            <person name="Arita M."/>
            <person name="Imose N."/>
            <person name="Musashino K."/>
            <person name="Yuuki H."/>
            <person name="Oshima A."/>
            <person name="Sasaki N."/>
            <person name="Aotsuka S."/>
            <person name="Yoshikawa Y."/>
            <person name="Matsunawa H."/>
            <person name="Ichihara T."/>
            <person name="Shiohata N."/>
            <person name="Sano S."/>
            <person name="Moriya S."/>
            <person name="Momiyama H."/>
            <person name="Satoh N."/>
            <person name="Takami S."/>
            <person name="Terashima Y."/>
            <person name="Suzuki O."/>
            <person name="Nakagawa S."/>
            <person name="Senoh A."/>
            <person name="Mizoguchi H."/>
            <person name="Goto Y."/>
            <person name="Shimizu F."/>
            <person name="Wakebe H."/>
            <person name="Hishigaki H."/>
            <person name="Watanabe T."/>
            <person name="Sugiyama A."/>
            <person name="Takemoto M."/>
            <person name="Kawakami B."/>
            <person name="Yamazaki M."/>
            <person name="Watanabe K."/>
            <person name="Kumagai A."/>
            <person name="Itakura S."/>
            <person name="Fukuzumi Y."/>
            <person name="Fujimori Y."/>
            <person name="Komiyama M."/>
            <person name="Tashiro H."/>
            <person name="Tanigami A."/>
            <person name="Fujiwara T."/>
            <person name="Ono T."/>
            <person name="Yamada K."/>
            <person name="Fujii Y."/>
            <person name="Ozaki K."/>
            <person name="Hirao M."/>
            <person name="Ohmori Y."/>
            <person name="Kawabata A."/>
            <person name="Hikiji T."/>
            <person name="Kobatake N."/>
            <person name="Inagaki H."/>
            <person name="Ikema Y."/>
            <person name="Okamoto S."/>
            <person name="Okitani R."/>
            <person name="Kawakami T."/>
            <person name="Noguchi S."/>
            <person name="Itoh T."/>
            <person name="Shigeta K."/>
            <person name="Senba T."/>
            <person name="Matsumura K."/>
            <person name="Nakajima Y."/>
            <person name="Mizuno T."/>
            <person name="Morinaga M."/>
            <person name="Sasaki M."/>
            <person name="Togashi T."/>
            <person name="Oyama M."/>
            <person name="Hata H."/>
            <person name="Watanabe M."/>
            <person name="Komatsu T."/>
            <person name="Mizushima-Sugano J."/>
            <person name="Satoh T."/>
            <person name="Shirai Y."/>
            <person name="Takahashi Y."/>
            <person name="Nakagawa K."/>
            <person name="Okumura K."/>
            <person name="Nagase T."/>
            <person name="Nomura N."/>
            <person name="Kikuchi H."/>
            <person name="Masuho Y."/>
            <person name="Yamashita R."/>
            <person name="Nakai K."/>
            <person name="Yada T."/>
            <person name="Nakamura Y."/>
            <person name="Ohara O."/>
            <person name="Isogai T."/>
            <person name="Sugano S."/>
        </authorList>
    </citation>
    <scope>NUCLEOTIDE SEQUENCE [LARGE SCALE MRNA] (ISOFORMS 1; 2 AND 3)</scope>
    <source>
        <tissue>Adrenal gland</tissue>
        <tissue>Brain</tissue>
        <tissue>Kidney</tissue>
    </source>
</reference>
<reference key="4">
    <citation type="journal article" date="2006" name="Genome Res.">
        <title>Diversification of transcriptional modulation: large-scale identification and characterization of putative alternative promoters of human genes.</title>
        <authorList>
            <person name="Kimura K."/>
            <person name="Wakamatsu A."/>
            <person name="Suzuki Y."/>
            <person name="Ota T."/>
            <person name="Nishikawa T."/>
            <person name="Yamashita R."/>
            <person name="Yamamoto J."/>
            <person name="Sekine M."/>
            <person name="Tsuritani K."/>
            <person name="Wakaguri H."/>
            <person name="Ishii S."/>
            <person name="Sugiyama T."/>
            <person name="Saito K."/>
            <person name="Isono Y."/>
            <person name="Irie R."/>
            <person name="Kushida N."/>
            <person name="Yoneyama T."/>
            <person name="Otsuka R."/>
            <person name="Kanda K."/>
            <person name="Yokoi T."/>
            <person name="Kondo H."/>
            <person name="Wagatsuma M."/>
            <person name="Murakawa K."/>
            <person name="Ishida S."/>
            <person name="Ishibashi T."/>
            <person name="Takahashi-Fujii A."/>
            <person name="Tanase T."/>
            <person name="Nagai K."/>
            <person name="Kikuchi H."/>
            <person name="Nakai K."/>
            <person name="Isogai T."/>
            <person name="Sugano S."/>
        </authorList>
    </citation>
    <scope>NUCLEOTIDE SEQUENCE [LARGE SCALE MRNA] (ISOFORM 4)</scope>
    <source>
        <tissue>Fetal muscle</tissue>
    </source>
</reference>
<reference key="5">
    <citation type="journal article" date="2007" name="BMC Genomics">
        <title>The full-ORF clone resource of the German cDNA consortium.</title>
        <authorList>
            <person name="Bechtel S."/>
            <person name="Rosenfelder H."/>
            <person name="Duda A."/>
            <person name="Schmidt C.P."/>
            <person name="Ernst U."/>
            <person name="Wellenreuther R."/>
            <person name="Mehrle A."/>
            <person name="Schuster C."/>
            <person name="Bahr A."/>
            <person name="Bloecker H."/>
            <person name="Heubner D."/>
            <person name="Hoerlein A."/>
            <person name="Michel G."/>
            <person name="Wedler H."/>
            <person name="Koehrer K."/>
            <person name="Ottenwaelder B."/>
            <person name="Poustka A."/>
            <person name="Wiemann S."/>
            <person name="Schupp I."/>
        </authorList>
    </citation>
    <scope>NUCLEOTIDE SEQUENCE [LARGE SCALE MRNA] (ISOFORM 2)</scope>
    <source>
        <tissue>Adipose tissue</tissue>
    </source>
</reference>
<reference key="6">
    <citation type="journal article" date="2003" name="Nature">
        <title>The DNA sequence of human chromosome 7.</title>
        <authorList>
            <person name="Hillier L.W."/>
            <person name="Fulton R.S."/>
            <person name="Fulton L.A."/>
            <person name="Graves T.A."/>
            <person name="Pepin K.H."/>
            <person name="Wagner-McPherson C."/>
            <person name="Layman D."/>
            <person name="Maas J."/>
            <person name="Jaeger S."/>
            <person name="Walker R."/>
            <person name="Wylie K."/>
            <person name="Sekhon M."/>
            <person name="Becker M.C."/>
            <person name="O'Laughlin M.D."/>
            <person name="Schaller M.E."/>
            <person name="Fewell G.A."/>
            <person name="Delehaunty K.D."/>
            <person name="Miner T.L."/>
            <person name="Nash W.E."/>
            <person name="Cordes M."/>
            <person name="Du H."/>
            <person name="Sun H."/>
            <person name="Edwards J."/>
            <person name="Bradshaw-Cordum H."/>
            <person name="Ali J."/>
            <person name="Andrews S."/>
            <person name="Isak A."/>
            <person name="Vanbrunt A."/>
            <person name="Nguyen C."/>
            <person name="Du F."/>
            <person name="Lamar B."/>
            <person name="Courtney L."/>
            <person name="Kalicki J."/>
            <person name="Ozersky P."/>
            <person name="Bielicki L."/>
            <person name="Scott K."/>
            <person name="Holmes A."/>
            <person name="Harkins R."/>
            <person name="Harris A."/>
            <person name="Strong C.M."/>
            <person name="Hou S."/>
            <person name="Tomlinson C."/>
            <person name="Dauphin-Kohlberg S."/>
            <person name="Kozlowicz-Reilly A."/>
            <person name="Leonard S."/>
            <person name="Rohlfing T."/>
            <person name="Rock S.M."/>
            <person name="Tin-Wollam A.-M."/>
            <person name="Abbott A."/>
            <person name="Minx P."/>
            <person name="Maupin R."/>
            <person name="Strowmatt C."/>
            <person name="Latreille P."/>
            <person name="Miller N."/>
            <person name="Johnson D."/>
            <person name="Murray J."/>
            <person name="Woessner J.P."/>
            <person name="Wendl M.C."/>
            <person name="Yang S.-P."/>
            <person name="Schultz B.R."/>
            <person name="Wallis J.W."/>
            <person name="Spieth J."/>
            <person name="Bieri T.A."/>
            <person name="Nelson J.O."/>
            <person name="Berkowicz N."/>
            <person name="Wohldmann P.E."/>
            <person name="Cook L.L."/>
            <person name="Hickenbotham M.T."/>
            <person name="Eldred J."/>
            <person name="Williams D."/>
            <person name="Bedell J.A."/>
            <person name="Mardis E.R."/>
            <person name="Clifton S.W."/>
            <person name="Chissoe S.L."/>
            <person name="Marra M.A."/>
            <person name="Raymond C."/>
            <person name="Haugen E."/>
            <person name="Gillett W."/>
            <person name="Zhou Y."/>
            <person name="James R."/>
            <person name="Phelps K."/>
            <person name="Iadanoto S."/>
            <person name="Bubb K."/>
            <person name="Simms E."/>
            <person name="Levy R."/>
            <person name="Clendenning J."/>
            <person name="Kaul R."/>
            <person name="Kent W.J."/>
            <person name="Furey T.S."/>
            <person name="Baertsch R.A."/>
            <person name="Brent M.R."/>
            <person name="Keibler E."/>
            <person name="Flicek P."/>
            <person name="Bork P."/>
            <person name="Suyama M."/>
            <person name="Bailey J.A."/>
            <person name="Portnoy M.E."/>
            <person name="Torrents D."/>
            <person name="Chinwalla A.T."/>
            <person name="Gish W.R."/>
            <person name="Eddy S.R."/>
            <person name="McPherson J.D."/>
            <person name="Olson M.V."/>
            <person name="Eichler E.E."/>
            <person name="Green E.D."/>
            <person name="Waterston R.H."/>
            <person name="Wilson R.K."/>
        </authorList>
    </citation>
    <scope>NUCLEOTIDE SEQUENCE [LARGE SCALE GENOMIC DNA]</scope>
</reference>
<reference key="7">
    <citation type="submission" date="2005-07" db="EMBL/GenBank/DDBJ databases">
        <authorList>
            <person name="Mural R.J."/>
            <person name="Istrail S."/>
            <person name="Sutton G.G."/>
            <person name="Florea L."/>
            <person name="Halpern A.L."/>
            <person name="Mobarry C.M."/>
            <person name="Lippert R."/>
            <person name="Walenz B."/>
            <person name="Shatkay H."/>
            <person name="Dew I."/>
            <person name="Miller J.R."/>
            <person name="Flanigan M.J."/>
            <person name="Edwards N.J."/>
            <person name="Bolanos R."/>
            <person name="Fasulo D."/>
            <person name="Halldorsson B.V."/>
            <person name="Hannenhalli S."/>
            <person name="Turner R."/>
            <person name="Yooseph S."/>
            <person name="Lu F."/>
            <person name="Nusskern D.R."/>
            <person name="Shue B.C."/>
            <person name="Zheng X.H."/>
            <person name="Zhong F."/>
            <person name="Delcher A.L."/>
            <person name="Huson D.H."/>
            <person name="Kravitz S.A."/>
            <person name="Mouchard L."/>
            <person name="Reinert K."/>
            <person name="Remington K.A."/>
            <person name="Clark A.G."/>
            <person name="Waterman M.S."/>
            <person name="Eichler E.E."/>
            <person name="Adams M.D."/>
            <person name="Hunkapiller M.W."/>
            <person name="Myers E.W."/>
            <person name="Venter J.C."/>
        </authorList>
    </citation>
    <scope>NUCLEOTIDE SEQUENCE [LARGE SCALE GENOMIC DNA]</scope>
</reference>
<reference key="8">
    <citation type="journal article" date="2004" name="Genome Res.">
        <title>The status, quality, and expansion of the NIH full-length cDNA project: the Mammalian Gene Collection (MGC).</title>
        <authorList>
            <consortium name="The MGC Project Team"/>
        </authorList>
    </citation>
    <scope>NUCLEOTIDE SEQUENCE [LARGE SCALE MRNA] (ISOFORMS 1 AND 2)</scope>
    <source>
        <tissue>Testis</tissue>
    </source>
</reference>
<reference key="9">
    <citation type="journal article" date="2002" name="Mol. Cell. Biol.">
        <title>Characterization of human RNA polymerase III identifies orthologues for Saccharomyces cerevisiae RNA polymerase III subunits.</title>
        <authorList>
            <person name="Hu P."/>
            <person name="Wu S."/>
            <person name="Sun Y."/>
            <person name="Yuan C.-C."/>
            <person name="Kobayashi R."/>
            <person name="Myers M.P."/>
            <person name="Hernandez N."/>
        </authorList>
    </citation>
    <scope>IDENTIFICATION IN THE RNA POL III COMPLEX</scope>
    <scope>IDENTIFICATION BY MASS SPECTROMETRY</scope>
    <scope>INTERACTION WITH RPC8</scope>
</reference>
<reference key="10">
    <citation type="journal article" date="2003" name="Mol. Cell. Biol.">
        <title>An Rpb4/Rpb7-like complex in yeast RNA polymerase III contains the orthologue of mammalian CGRP-RCP.</title>
        <authorList>
            <person name="Siaut M."/>
            <person name="Zaros C."/>
            <person name="Levivier E."/>
            <person name="Ferri M.L."/>
            <person name="Court M."/>
            <person name="Werner M."/>
            <person name="Callebaut I."/>
            <person name="Thuriaux P."/>
            <person name="Sentenac A."/>
            <person name="Conesa C."/>
        </authorList>
    </citation>
    <scope>IDENTIFICATION IN THE RNA POL III COMPLEX</scope>
    <scope>IDENTIFICATION BY MASS SPECTROMETRY</scope>
</reference>
<reference key="11">
    <citation type="journal article" date="2009" name="Cell">
        <title>RNA polymerase III detects cytosolic DNA and induces type I interferons through the RIG-I pathway.</title>
        <authorList>
            <person name="Chiu Y.-H."/>
            <person name="Macmillan J.B."/>
            <person name="Chen Z.J."/>
        </authorList>
    </citation>
    <scope>FUNCTION</scope>
</reference>
<reference key="12">
    <citation type="journal article" date="2009" name="Nat. Immunol.">
        <title>RIG-I-dependent sensing of poly(dA:dT) through the induction of an RNA polymerase III-transcribed RNA intermediate.</title>
        <authorList>
            <person name="Ablasser A."/>
            <person name="Bauernfeind F."/>
            <person name="Hartmann G."/>
            <person name="Latz E."/>
            <person name="Fitzgerald K.A."/>
            <person name="Hornung V."/>
        </authorList>
    </citation>
    <scope>FUNCTION</scope>
</reference>
<reference key="13">
    <citation type="journal article" date="2010" name="Genome Res.">
        <title>Defining the RNA polymerase III transcriptome: Genome-wide localization of the RNA polymerase III transcription machinery in human cells.</title>
        <authorList>
            <person name="Canella D."/>
            <person name="Praz V."/>
            <person name="Reina J.H."/>
            <person name="Cousin P."/>
            <person name="Hernandez N."/>
        </authorList>
    </citation>
    <scope>FUNCTION OF POL III</scope>
</reference>
<reference key="14">
    <citation type="journal article" date="2020" name="Nat. Commun.">
        <title>Structure of human RNA polymerase III.</title>
        <authorList>
            <person name="Ramsay E.P."/>
            <person name="Abascal-Palacios G."/>
            <person name="Daiss J.L."/>
            <person name="King H."/>
            <person name="Gouge J."/>
            <person name="Pilsl M."/>
            <person name="Beuron F."/>
            <person name="Morris E."/>
            <person name="Gunkel P."/>
            <person name="Engel C."/>
            <person name="Vannini A."/>
        </authorList>
    </citation>
    <scope>STRUCTURE BY ELECTRON MICROSCOPY (4.00 ANGSTROMS)</scope>
    <scope>SUBUNIT</scope>
    <scope>SUBCELLULAR LOCATION</scope>
</reference>
<reference key="15">
    <citation type="journal article" date="2021" name="Cell Res.">
        <title>Structure of human RNA polymerase III elongation complex.</title>
        <authorList>
            <person name="Li L."/>
            <person name="Yu Z."/>
            <person name="Zhao D."/>
            <person name="Ren Y."/>
            <person name="Hou H."/>
            <person name="Xu Y."/>
        </authorList>
    </citation>
    <scope>STRUCTURE BY ELECTRON MICROSCOPY (3.35 ANGSTROMS)</scope>
    <scope>SUBUNIT</scope>
</reference>
<reference key="16">
    <citation type="journal article" date="2021" name="Nat. Commun.">
        <title>Structural insights into RNA polymerase III-mediated transcription termination through trapping poly-deoxythymidine.</title>
        <authorList>
            <person name="Hou H."/>
            <person name="Li Y."/>
            <person name="Wang M."/>
            <person name="Liu A."/>
            <person name="Yu Z."/>
            <person name="Chen K."/>
            <person name="Zhao D."/>
            <person name="Xu Y."/>
        </authorList>
    </citation>
    <scope>STRUCTURE BY ELECTRON MICROSCOPY (3.60 ANGSTROMS)</scope>
    <scope>FUNCTION</scope>
    <scope>SUBUNIT</scope>
</reference>
<reference key="17">
    <citation type="journal article" date="2021" name="Nat. Struct. Mol. Biol.">
        <title>Cryo-EM structures of human RNA polymerase III in its unbound and transcribing states.</title>
        <authorList>
            <person name="Girbig M."/>
            <person name="Misiaszek A.D."/>
            <person name="Vorlander M.K."/>
            <person name="Lafita A."/>
            <person name="Grotsch H."/>
            <person name="Baudin F."/>
            <person name="Bateman A."/>
            <person name="Muller C.W."/>
        </authorList>
    </citation>
    <scope>STRUCTURE BY ELECTRON MICROSCOPY (2.80 ANGSTROMS)</scope>
    <scope>FUNCTION</scope>
    <scope>SUBUNIT</scope>
</reference>
<reference key="18">
    <citation type="journal article" date="2021" name="Nat. Struct. Mol. Biol.">
        <title>Structural insights into transcriptional regulation of human RNA polymerase III.</title>
        <authorList>
            <person name="Wang Q."/>
            <person name="Li S."/>
            <person name="Wan F."/>
            <person name="Xu Y."/>
            <person name="Wu Z."/>
            <person name="Cao M."/>
            <person name="Lan P."/>
            <person name="Lei M."/>
            <person name="Wu J."/>
        </authorList>
    </citation>
    <scope>STRUCTURE BY ELECTRON MICROSCOPY (2.90 ANGSTROMS)</scope>
    <scope>SUBUNIT</scope>
</reference>
<accession>O75575</accession>
<accession>A8MUZ4</accession>
<accession>A8MW23</accession>
<accession>B2R4H4</accession>
<accession>B4E198</accession>
<accession>Q3KRA3</accession>
<accession>Q5HYF1</accession>
<accession>Q8IXL4</accession>
<evidence type="ECO:0000250" key="1">
    <source>
        <dbReference type="UniProtKB" id="O35427"/>
    </source>
</evidence>
<evidence type="ECO:0000250" key="2">
    <source>
        <dbReference type="UniProtKB" id="Q9C0Z9"/>
    </source>
</evidence>
<evidence type="ECO:0000256" key="3">
    <source>
        <dbReference type="SAM" id="MobiDB-lite"/>
    </source>
</evidence>
<evidence type="ECO:0000269" key="4">
    <source>
    </source>
</evidence>
<evidence type="ECO:0000269" key="5">
    <source>
    </source>
</evidence>
<evidence type="ECO:0000269" key="6">
    <source>
    </source>
</evidence>
<evidence type="ECO:0000269" key="7">
    <source>
    </source>
</evidence>
<evidence type="ECO:0000269" key="8">
    <source>
    </source>
</evidence>
<evidence type="ECO:0000269" key="9">
    <source>
    </source>
</evidence>
<evidence type="ECO:0000269" key="10">
    <source>
    </source>
</evidence>
<evidence type="ECO:0000269" key="11">
    <source>
    </source>
</evidence>
<evidence type="ECO:0000269" key="12">
    <source>
    </source>
</evidence>
<evidence type="ECO:0000269" key="13">
    <source>
    </source>
</evidence>
<evidence type="ECO:0000269" key="14">
    <source>
    </source>
</evidence>
<evidence type="ECO:0000303" key="15">
    <source>
    </source>
</evidence>
<evidence type="ECO:0000303" key="16">
    <source>
    </source>
</evidence>
<evidence type="ECO:0000303" key="17">
    <source>
    </source>
</evidence>
<evidence type="ECO:0000303" key="18">
    <source>
    </source>
</evidence>
<evidence type="ECO:0000305" key="19"/>
<evidence type="ECO:0000312" key="20">
    <source>
        <dbReference type="HGNC" id="HGNC:17888"/>
    </source>
</evidence>
<evidence type="ECO:0007829" key="21">
    <source>
        <dbReference type="PDB" id="7AE1"/>
    </source>
</evidence>
<evidence type="ECO:0007829" key="22">
    <source>
        <dbReference type="PDB" id="7D59"/>
    </source>
</evidence>
<feature type="chain" id="PRO_0000079335" description="DNA-directed RNA polymerase III subunit RPC9">
    <location>
        <begin position="1"/>
        <end position="148"/>
    </location>
</feature>
<feature type="region of interest" description="Disordered" evidence="3">
    <location>
        <begin position="124"/>
        <end position="148"/>
    </location>
</feature>
<feature type="splice variant" id="VSP_043249" description="In isoform 3." evidence="15">
    <original>MEVKDANSALLSN</original>
    <variation>MQRGDPGEHLGARSWHLGAVGGGGDSCEVKDANSALLSN</variation>
    <location>
        <begin position="1"/>
        <end position="13"/>
    </location>
</feature>
<feature type="splice variant" id="VSP_046273" description="In isoform 4." evidence="17">
    <location>
        <begin position="4"/>
        <end position="80"/>
    </location>
</feature>
<feature type="splice variant" id="VSP_007538" description="In isoform 2 and isoform 3." evidence="15 16 18">
    <location>
        <begin position="14"/>
        <end position="46"/>
    </location>
</feature>
<feature type="strand" evidence="21">
    <location>
        <begin position="2"/>
        <end position="7"/>
    </location>
</feature>
<feature type="helix" evidence="21">
    <location>
        <begin position="13"/>
        <end position="24"/>
    </location>
</feature>
<feature type="strand" evidence="21">
    <location>
        <begin position="27"/>
        <end position="30"/>
    </location>
</feature>
<feature type="strand" evidence="21">
    <location>
        <begin position="34"/>
        <end position="36"/>
    </location>
</feature>
<feature type="helix" evidence="21">
    <location>
        <begin position="38"/>
        <end position="53"/>
    </location>
</feature>
<feature type="turn" evidence="21">
    <location>
        <begin position="57"/>
        <end position="60"/>
    </location>
</feature>
<feature type="helix" evidence="21">
    <location>
        <begin position="63"/>
        <end position="73"/>
    </location>
</feature>
<feature type="helix" evidence="21">
    <location>
        <begin position="74"/>
        <end position="76"/>
    </location>
</feature>
<feature type="helix" evidence="21">
    <location>
        <begin position="80"/>
        <end position="89"/>
    </location>
</feature>
<feature type="helix" evidence="21">
    <location>
        <begin position="95"/>
        <end position="100"/>
    </location>
</feature>
<feature type="strand" evidence="22">
    <location>
        <begin position="101"/>
        <end position="103"/>
    </location>
</feature>
<feature type="helix" evidence="21">
    <location>
        <begin position="104"/>
        <end position="107"/>
    </location>
</feature>
<feature type="helix" evidence="21">
    <location>
        <begin position="110"/>
        <end position="123"/>
    </location>
</feature>
<organism>
    <name type="scientific">Homo sapiens</name>
    <name type="common">Human</name>
    <dbReference type="NCBI Taxonomy" id="9606"/>
    <lineage>
        <taxon>Eukaryota</taxon>
        <taxon>Metazoa</taxon>
        <taxon>Chordata</taxon>
        <taxon>Craniata</taxon>
        <taxon>Vertebrata</taxon>
        <taxon>Euteleostomi</taxon>
        <taxon>Mammalia</taxon>
        <taxon>Eutheria</taxon>
        <taxon>Euarchontoglires</taxon>
        <taxon>Primates</taxon>
        <taxon>Haplorrhini</taxon>
        <taxon>Catarrhini</taxon>
        <taxon>Hominidae</taxon>
        <taxon>Homo</taxon>
    </lineage>
</organism>
<keyword id="KW-0002">3D-structure</keyword>
<keyword id="KW-0025">Alternative splicing</keyword>
<keyword id="KW-0051">Antiviral defense</keyword>
<keyword id="KW-1003">Cell membrane</keyword>
<keyword id="KW-0240">DNA-directed RNA polymerase</keyword>
<keyword id="KW-0391">Immunity</keyword>
<keyword id="KW-0399">Innate immunity</keyword>
<keyword id="KW-0472">Membrane</keyword>
<keyword id="KW-0539">Nucleus</keyword>
<keyword id="KW-1267">Proteomics identification</keyword>
<keyword id="KW-1185">Reference proteome</keyword>
<keyword id="KW-0804">Transcription</keyword>
<sequence length="148" mass="16871">MEVKDANSALLSNYEVFQLLTDLKEQRKESGKNKHSSGQQNLNTITYETLKYISKTPCRHQSPEIVREFLTALKSHKLTKAEKLQLLNHRPVTAVEIQLMVEESEERLTEEQIEALLHTVTSILPAEPEAEQKKNTNSNVAMDEEDPA</sequence>
<dbReference type="EMBL" id="AF073792">
    <property type="protein sequence ID" value="AAC25992.1"/>
    <property type="molecule type" value="mRNA"/>
</dbReference>
<dbReference type="EMBL" id="U51134">
    <property type="protein sequence ID" value="AAD05036.1"/>
    <property type="molecule type" value="mRNA"/>
</dbReference>
<dbReference type="EMBL" id="AK290553">
    <property type="protein sequence ID" value="BAF83242.1"/>
    <property type="molecule type" value="mRNA"/>
</dbReference>
<dbReference type="EMBL" id="AK303737">
    <property type="protein sequence ID" value="BAG64710.1"/>
    <property type="molecule type" value="mRNA"/>
</dbReference>
<dbReference type="EMBL" id="AK311829">
    <property type="protein sequence ID" value="BAG34771.1"/>
    <property type="molecule type" value="mRNA"/>
</dbReference>
<dbReference type="EMBL" id="BP233211">
    <property type="status" value="NOT_ANNOTATED_CDS"/>
    <property type="molecule type" value="mRNA"/>
</dbReference>
<dbReference type="EMBL" id="BX647867">
    <property type="protein sequence ID" value="CAI46069.1"/>
    <property type="molecule type" value="mRNA"/>
</dbReference>
<dbReference type="EMBL" id="AC068533">
    <property type="status" value="NOT_ANNOTATED_CDS"/>
    <property type="molecule type" value="Genomic_DNA"/>
</dbReference>
<dbReference type="EMBL" id="CH471140">
    <property type="protein sequence ID" value="EAX07941.1"/>
    <property type="molecule type" value="Genomic_DNA"/>
</dbReference>
<dbReference type="EMBL" id="BC040107">
    <property type="protein sequence ID" value="AAH40107.1"/>
    <property type="molecule type" value="mRNA"/>
</dbReference>
<dbReference type="EMBL" id="BC105808">
    <property type="protein sequence ID" value="AAI05809.1"/>
    <property type="molecule type" value="mRNA"/>
</dbReference>
<dbReference type="CCDS" id="CCDS47599.1">
    <molecule id="O75575-2"/>
</dbReference>
<dbReference type="CCDS" id="CCDS47600.1">
    <molecule id="O75575-4"/>
</dbReference>
<dbReference type="CCDS" id="CCDS55116.1">
    <molecule id="O75575-3"/>
</dbReference>
<dbReference type="CCDS" id="CCDS5532.1">
    <molecule id="O75575-1"/>
</dbReference>
<dbReference type="RefSeq" id="NP_001035737.1">
    <molecule id="O75575-2"/>
    <property type="nucleotide sequence ID" value="NM_001040647.2"/>
</dbReference>
<dbReference type="RefSeq" id="NP_001035738.1">
    <molecule id="O75575-4"/>
    <property type="nucleotide sequence ID" value="NM_001040648.2"/>
</dbReference>
<dbReference type="RefSeq" id="NP_001135886.1">
    <molecule id="O75575-3"/>
    <property type="nucleotide sequence ID" value="NM_001142414.1"/>
</dbReference>
<dbReference type="RefSeq" id="NP_055293.1">
    <molecule id="O75575-1"/>
    <property type="nucleotide sequence ID" value="NM_014478.5"/>
</dbReference>
<dbReference type="PDB" id="7A6H">
    <property type="method" value="EM"/>
    <property type="resolution" value="3.30 A"/>
    <property type="chains" value="D=1-148"/>
</dbReference>
<dbReference type="PDB" id="7AE1">
    <property type="method" value="EM"/>
    <property type="resolution" value="2.80 A"/>
    <property type="chains" value="D=1-148"/>
</dbReference>
<dbReference type="PDB" id="7AE3">
    <property type="method" value="EM"/>
    <property type="resolution" value="3.10 A"/>
    <property type="chains" value="D=1-148"/>
</dbReference>
<dbReference type="PDB" id="7AEA">
    <property type="method" value="EM"/>
    <property type="resolution" value="3.40 A"/>
    <property type="chains" value="D=1-148"/>
</dbReference>
<dbReference type="PDB" id="7AST">
    <property type="method" value="EM"/>
    <property type="resolution" value="4.00 A"/>
    <property type="chains" value="I=1-148"/>
</dbReference>
<dbReference type="PDB" id="7D58">
    <property type="method" value="EM"/>
    <property type="resolution" value="2.90 A"/>
    <property type="chains" value="D=1-148"/>
</dbReference>
<dbReference type="PDB" id="7D59">
    <property type="method" value="EM"/>
    <property type="resolution" value="3.10 A"/>
    <property type="chains" value="D=1-148"/>
</dbReference>
<dbReference type="PDB" id="7DN3">
    <property type="method" value="EM"/>
    <property type="resolution" value="3.50 A"/>
    <property type="chains" value="D=1-148"/>
</dbReference>
<dbReference type="PDB" id="7DU2">
    <property type="method" value="EM"/>
    <property type="resolution" value="3.35 A"/>
    <property type="chains" value="D=1-148"/>
</dbReference>
<dbReference type="PDB" id="7FJI">
    <property type="method" value="EM"/>
    <property type="resolution" value="3.60 A"/>
    <property type="chains" value="D=1-148"/>
</dbReference>
<dbReference type="PDB" id="7FJJ">
    <property type="method" value="EM"/>
    <property type="resolution" value="3.60 A"/>
    <property type="chains" value="D=1-148"/>
</dbReference>
<dbReference type="PDB" id="8ITY">
    <property type="method" value="EM"/>
    <property type="resolution" value="3.90 A"/>
    <property type="chains" value="D=1-148"/>
</dbReference>
<dbReference type="PDB" id="8IUE">
    <property type="method" value="EM"/>
    <property type="resolution" value="4.10 A"/>
    <property type="chains" value="D=1-148"/>
</dbReference>
<dbReference type="PDB" id="8IUH">
    <property type="method" value="EM"/>
    <property type="resolution" value="3.40 A"/>
    <property type="chains" value="D=1-148"/>
</dbReference>
<dbReference type="PDB" id="9FSO">
    <property type="method" value="EM"/>
    <property type="resolution" value="3.28 A"/>
    <property type="chains" value="I=1-148"/>
</dbReference>
<dbReference type="PDB" id="9FSP">
    <property type="method" value="EM"/>
    <property type="resolution" value="3.39 A"/>
    <property type="chains" value="I=1-148"/>
</dbReference>
<dbReference type="PDB" id="9FSQ">
    <property type="method" value="EM"/>
    <property type="resolution" value="3.51 A"/>
    <property type="chains" value="I=1-148"/>
</dbReference>
<dbReference type="PDB" id="9FSR">
    <property type="method" value="EM"/>
    <property type="resolution" value="3.76 A"/>
    <property type="chains" value="I=1-148"/>
</dbReference>
<dbReference type="PDB" id="9FSS">
    <property type="method" value="EM"/>
    <property type="resolution" value="4.14 A"/>
    <property type="chains" value="I=1-148"/>
</dbReference>
<dbReference type="PDBsum" id="7A6H"/>
<dbReference type="PDBsum" id="7AE1"/>
<dbReference type="PDBsum" id="7AE3"/>
<dbReference type="PDBsum" id="7AEA"/>
<dbReference type="PDBsum" id="7AST"/>
<dbReference type="PDBsum" id="7D58"/>
<dbReference type="PDBsum" id="7D59"/>
<dbReference type="PDBsum" id="7DN3"/>
<dbReference type="PDBsum" id="7DU2"/>
<dbReference type="PDBsum" id="7FJI"/>
<dbReference type="PDBsum" id="7FJJ"/>
<dbReference type="PDBsum" id="8ITY"/>
<dbReference type="PDBsum" id="8IUE"/>
<dbReference type="PDBsum" id="8IUH"/>
<dbReference type="PDBsum" id="9FSO"/>
<dbReference type="PDBsum" id="9FSP"/>
<dbReference type="PDBsum" id="9FSQ"/>
<dbReference type="PDBsum" id="9FSR"/>
<dbReference type="PDBsum" id="9FSS"/>
<dbReference type="EMDB" id="EMD-11673"/>
<dbReference type="EMDB" id="EMD-11736"/>
<dbReference type="EMDB" id="EMD-11738"/>
<dbReference type="EMDB" id="EMD-11742"/>
<dbReference type="EMDB" id="EMD-11904"/>
<dbReference type="EMDB" id="EMD-30577"/>
<dbReference type="EMDB" id="EMD-30578"/>
<dbReference type="EMDB" id="EMD-30779"/>
<dbReference type="EMDB" id="EMD-30865"/>
<dbReference type="EMDB" id="EMD-31621"/>
<dbReference type="EMDB" id="EMD-31622"/>
<dbReference type="EMDB" id="EMD-35712"/>
<dbReference type="EMDB" id="EMD-35719"/>
<dbReference type="EMDB" id="EMD-35722"/>
<dbReference type="EMDB" id="EMD-50730"/>
<dbReference type="EMDB" id="EMD-50731"/>
<dbReference type="EMDB" id="EMD-50732"/>
<dbReference type="EMDB" id="EMD-50733"/>
<dbReference type="EMDB" id="EMD-50734"/>
<dbReference type="SMR" id="O75575"/>
<dbReference type="BioGRID" id="118121">
    <property type="interactions" value="95"/>
</dbReference>
<dbReference type="ComplexPortal" id="CPX-2393">
    <property type="entry name" value="DNA-directed RNA polymerase III complex, POLR3G variant"/>
</dbReference>
<dbReference type="ComplexPortal" id="CPX-7482">
    <property type="entry name" value="DNA-directed RNA polymerase III complex, POLR3GL variant"/>
</dbReference>
<dbReference type="CORUM" id="O75575"/>
<dbReference type="FunCoup" id="O75575">
    <property type="interactions" value="742"/>
</dbReference>
<dbReference type="IntAct" id="O75575">
    <property type="interactions" value="52"/>
</dbReference>
<dbReference type="MINT" id="O75575"/>
<dbReference type="STRING" id="9606.ENSP00000378736"/>
<dbReference type="iPTMnet" id="O75575"/>
<dbReference type="MetOSite" id="O75575"/>
<dbReference type="PhosphoSitePlus" id="O75575"/>
<dbReference type="BioMuta" id="CRCP"/>
<dbReference type="jPOST" id="O75575"/>
<dbReference type="MassIVE" id="O75575"/>
<dbReference type="PaxDb" id="9606-ENSP00000378736"/>
<dbReference type="PeptideAtlas" id="O75575"/>
<dbReference type="ProteomicsDB" id="2141"/>
<dbReference type="ProteomicsDB" id="50092">
    <molecule id="O75575-1"/>
</dbReference>
<dbReference type="ProteomicsDB" id="50093">
    <molecule id="O75575-2"/>
</dbReference>
<dbReference type="ProteomicsDB" id="50094">
    <molecule id="O75575-3"/>
</dbReference>
<dbReference type="Pumba" id="O75575"/>
<dbReference type="Antibodypedia" id="34815">
    <property type="antibodies" value="109 antibodies from 25 providers"/>
</dbReference>
<dbReference type="DNASU" id="27297"/>
<dbReference type="Ensembl" id="ENST00000338592.5">
    <molecule id="O75575-2"/>
    <property type="protein sequence ID" value="ENSP00000340044.5"/>
    <property type="gene ID" value="ENSG00000241258.8"/>
</dbReference>
<dbReference type="Ensembl" id="ENST00000395326.8">
    <molecule id="O75575-1"/>
    <property type="protein sequence ID" value="ENSP00000378736.3"/>
    <property type="gene ID" value="ENSG00000241258.8"/>
</dbReference>
<dbReference type="Ensembl" id="ENST00000398684.6">
    <molecule id="O75575-4"/>
    <property type="protein sequence ID" value="ENSP00000381674.2"/>
    <property type="gene ID" value="ENSG00000241258.8"/>
</dbReference>
<dbReference type="Ensembl" id="ENST00000431089.6">
    <molecule id="O75575-3"/>
    <property type="protein sequence ID" value="ENSP00000388653.2"/>
    <property type="gene ID" value="ENSG00000241258.8"/>
</dbReference>
<dbReference type="GeneID" id="27297"/>
<dbReference type="KEGG" id="hsa:27297"/>
<dbReference type="MANE-Select" id="ENST00000395326.8">
    <property type="protein sequence ID" value="ENSP00000378736.3"/>
    <property type="RefSeq nucleotide sequence ID" value="NM_014478.5"/>
    <property type="RefSeq protein sequence ID" value="NP_055293.1"/>
</dbReference>
<dbReference type="UCSC" id="uc003tus.4">
    <molecule id="O75575-1"/>
    <property type="organism name" value="human"/>
</dbReference>
<dbReference type="AGR" id="HGNC:17888"/>
<dbReference type="CTD" id="27297"/>
<dbReference type="DisGeNET" id="27297"/>
<dbReference type="GeneCards" id="CRCP"/>
<dbReference type="HGNC" id="HGNC:17888">
    <property type="gene designation" value="CRCP"/>
</dbReference>
<dbReference type="HPA" id="ENSG00000241258">
    <property type="expression patterns" value="Low tissue specificity"/>
</dbReference>
<dbReference type="MIM" id="606121">
    <property type="type" value="gene"/>
</dbReference>
<dbReference type="neXtProt" id="NX_O75575"/>
<dbReference type="OpenTargets" id="ENSG00000241258"/>
<dbReference type="PharmGKB" id="PA164718123"/>
<dbReference type="VEuPathDB" id="HostDB:ENSG00000241258"/>
<dbReference type="eggNOG" id="KOG4168">
    <property type="taxonomic scope" value="Eukaryota"/>
</dbReference>
<dbReference type="GeneTree" id="ENSGT00390000014189"/>
<dbReference type="HOGENOM" id="CLU_092529_5_0_1"/>
<dbReference type="InParanoid" id="O75575"/>
<dbReference type="OMA" id="VMIINLR"/>
<dbReference type="OrthoDB" id="1746530at2759"/>
<dbReference type="PAN-GO" id="O75575">
    <property type="GO annotations" value="2 GO annotations based on evolutionary models"/>
</dbReference>
<dbReference type="PhylomeDB" id="O75575"/>
<dbReference type="TreeFam" id="TF323294"/>
<dbReference type="PathwayCommons" id="O75575"/>
<dbReference type="Reactome" id="R-HSA-1834949">
    <property type="pathway name" value="Cytosolic sensors of pathogen-associated DNA"/>
</dbReference>
<dbReference type="Reactome" id="R-HSA-73780">
    <property type="pathway name" value="RNA Polymerase III Chain Elongation"/>
</dbReference>
<dbReference type="Reactome" id="R-HSA-73980">
    <property type="pathway name" value="RNA Polymerase III Transcription Termination"/>
</dbReference>
<dbReference type="Reactome" id="R-HSA-749476">
    <property type="pathway name" value="RNA Polymerase III Abortive And Retractive Initiation"/>
</dbReference>
<dbReference type="Reactome" id="R-HSA-76061">
    <property type="pathway name" value="RNA Polymerase III Transcription Initiation From Type 1 Promoter"/>
</dbReference>
<dbReference type="Reactome" id="R-HSA-76066">
    <property type="pathway name" value="RNA Polymerase III Transcription Initiation From Type 2 Promoter"/>
</dbReference>
<dbReference type="Reactome" id="R-HSA-76071">
    <property type="pathway name" value="RNA Polymerase III Transcription Initiation From Type 3 Promoter"/>
</dbReference>
<dbReference type="SignaLink" id="O75575"/>
<dbReference type="SIGNOR" id="O75575"/>
<dbReference type="BioGRID-ORCS" id="27297">
    <property type="hits" value="784 hits in 1170 CRISPR screens"/>
</dbReference>
<dbReference type="ChiTaRS" id="CRCP">
    <property type="organism name" value="human"/>
</dbReference>
<dbReference type="GeneWiki" id="RCP9"/>
<dbReference type="GenomeRNAi" id="27297"/>
<dbReference type="Pharos" id="O75575">
    <property type="development level" value="Tbio"/>
</dbReference>
<dbReference type="PRO" id="PR:O75575"/>
<dbReference type="Proteomes" id="UP000005640">
    <property type="component" value="Chromosome 7"/>
</dbReference>
<dbReference type="RNAct" id="O75575">
    <property type="molecule type" value="protein"/>
</dbReference>
<dbReference type="Bgee" id="ENSG00000241258">
    <property type="expression patterns" value="Expressed in calcaneal tendon and 183 other cell types or tissues"/>
</dbReference>
<dbReference type="ExpressionAtlas" id="O75575">
    <property type="expression patterns" value="baseline and differential"/>
</dbReference>
<dbReference type="GO" id="GO:0001669">
    <property type="term" value="C:acrosomal vesicle"/>
    <property type="evidence" value="ECO:0007669"/>
    <property type="project" value="Ensembl"/>
</dbReference>
<dbReference type="GO" id="GO:0005829">
    <property type="term" value="C:cytosol"/>
    <property type="evidence" value="ECO:0000304"/>
    <property type="project" value="Reactome"/>
</dbReference>
<dbReference type="GO" id="GO:0009360">
    <property type="term" value="C:DNA polymerase III complex"/>
    <property type="evidence" value="ECO:0000314"/>
    <property type="project" value="UniProtKB"/>
</dbReference>
<dbReference type="GO" id="GO:0005654">
    <property type="term" value="C:nucleoplasm"/>
    <property type="evidence" value="ECO:0000304"/>
    <property type="project" value="Reactome"/>
</dbReference>
<dbReference type="GO" id="GO:0005886">
    <property type="term" value="C:plasma membrane"/>
    <property type="evidence" value="ECO:0007669"/>
    <property type="project" value="UniProtKB-SubCell"/>
</dbReference>
<dbReference type="GO" id="GO:0005666">
    <property type="term" value="C:RNA polymerase III complex"/>
    <property type="evidence" value="ECO:0000314"/>
    <property type="project" value="UniProtKB"/>
</dbReference>
<dbReference type="GO" id="GO:0001635">
    <property type="term" value="F:calcitonin gene-related peptide receptor activity"/>
    <property type="evidence" value="ECO:0007669"/>
    <property type="project" value="Ensembl"/>
</dbReference>
<dbReference type="GO" id="GO:0003899">
    <property type="term" value="F:DNA-directed RNA polymerase activity"/>
    <property type="evidence" value="ECO:0000314"/>
    <property type="project" value="UniProtKB"/>
</dbReference>
<dbReference type="GO" id="GO:0000166">
    <property type="term" value="F:nucleotide binding"/>
    <property type="evidence" value="ECO:0007669"/>
    <property type="project" value="InterPro"/>
</dbReference>
<dbReference type="GO" id="GO:0051607">
    <property type="term" value="P:defense response to virus"/>
    <property type="evidence" value="ECO:0007669"/>
    <property type="project" value="UniProtKB-KW"/>
</dbReference>
<dbReference type="GO" id="GO:0045087">
    <property type="term" value="P:innate immune response"/>
    <property type="evidence" value="ECO:0007669"/>
    <property type="project" value="UniProtKB-KW"/>
</dbReference>
<dbReference type="GO" id="GO:0007218">
    <property type="term" value="P:neuropeptide signaling pathway"/>
    <property type="evidence" value="ECO:0007669"/>
    <property type="project" value="Ensembl"/>
</dbReference>
<dbReference type="GO" id="GO:0006383">
    <property type="term" value="P:transcription by RNA polymerase III"/>
    <property type="evidence" value="ECO:0000314"/>
    <property type="project" value="UniProtKB"/>
</dbReference>
<dbReference type="GO" id="GO:0006384">
    <property type="term" value="P:transcription initiation at RNA polymerase III promoter"/>
    <property type="evidence" value="ECO:0000318"/>
    <property type="project" value="GO_Central"/>
</dbReference>
<dbReference type="FunFam" id="1.20.1250.40:FF:000002">
    <property type="entry name" value="DNA-directed RNA polymerase III subunit RPC9"/>
    <property type="match status" value="1"/>
</dbReference>
<dbReference type="Gene3D" id="1.20.1250.40">
    <property type="match status" value="1"/>
</dbReference>
<dbReference type="InterPro" id="IPR010997">
    <property type="entry name" value="HRDC-like_sf"/>
</dbReference>
<dbReference type="InterPro" id="IPR006590">
    <property type="entry name" value="RNA_pol_Rpb4/RPC9_core"/>
</dbReference>
<dbReference type="InterPro" id="IPR005574">
    <property type="entry name" value="Rpb4/RPC9"/>
</dbReference>
<dbReference type="InterPro" id="IPR038324">
    <property type="entry name" value="Rpb4/RPC9_sf"/>
</dbReference>
<dbReference type="InterPro" id="IPR038846">
    <property type="entry name" value="RPC9"/>
</dbReference>
<dbReference type="PANTHER" id="PTHR15561">
    <property type="entry name" value="CALCITONIN GENE-RELATED PEPTIDE-RECEPTOR COMPONENT PROTEIN"/>
    <property type="match status" value="1"/>
</dbReference>
<dbReference type="PANTHER" id="PTHR15561:SF0">
    <property type="entry name" value="DNA-DIRECTED RNA POLYMERASE III SUBUNIT RPC9"/>
    <property type="match status" value="1"/>
</dbReference>
<dbReference type="Pfam" id="PF03874">
    <property type="entry name" value="RNA_pol_Rpb4"/>
    <property type="match status" value="1"/>
</dbReference>
<dbReference type="SMART" id="SM00657">
    <property type="entry name" value="RPOL4c"/>
    <property type="match status" value="1"/>
</dbReference>
<dbReference type="SUPFAM" id="SSF47819">
    <property type="entry name" value="HRDC-like"/>
    <property type="match status" value="1"/>
</dbReference>